<name>TRUD_NITSB</name>
<accession>A6Q2U7</accession>
<sequence>MDRLFFLDHSPIDFYFKQSPETFVVEEVPLYPFSGAGEHLIVKVRKKNMTTWQMLQSISEQVGVKIRDIGYAGLKDKNALTYQYISLHKKYEEALKKFSHPLIKTIELTYHKNKIRRGHLKGNRFFIRLKKVKPVDAKKIDEVLKILEEEGMPNFFGYQRFGIDGDNWQLGKEIVEGKRKERNKTLKKLLINAYQSHLFNLWLSKRIELSKLLNCFTQNELSQTLDLPRSIIKELQCQKPFFKLFPGDIAMHYPNGKIFGVEDVKGESERFFAKAIAPTGLLPGVKTKRCDGLARDIEKDYDDERISEFGDRRYAWIFPQELHGIYKEKNAWYELSFFLPKGSYATVLLEEIAHRKIKGE</sequence>
<gene>
    <name evidence="1" type="primary">truD</name>
    <name type="ordered locus">NIS_0692</name>
</gene>
<dbReference type="EC" id="5.4.99.27" evidence="1"/>
<dbReference type="EMBL" id="AP009178">
    <property type="protein sequence ID" value="BAF69806.1"/>
    <property type="molecule type" value="Genomic_DNA"/>
</dbReference>
<dbReference type="RefSeq" id="WP_012082069.1">
    <property type="nucleotide sequence ID" value="NC_009662.1"/>
</dbReference>
<dbReference type="SMR" id="A6Q2U7"/>
<dbReference type="FunCoup" id="A6Q2U7">
    <property type="interactions" value="47"/>
</dbReference>
<dbReference type="STRING" id="387092.NIS_0692"/>
<dbReference type="KEGG" id="nis:NIS_0692"/>
<dbReference type="eggNOG" id="COG0585">
    <property type="taxonomic scope" value="Bacteria"/>
</dbReference>
<dbReference type="HOGENOM" id="CLU_005281_4_0_7"/>
<dbReference type="InParanoid" id="A6Q2U7"/>
<dbReference type="OrthoDB" id="1550679at2"/>
<dbReference type="Proteomes" id="UP000001118">
    <property type="component" value="Chromosome"/>
</dbReference>
<dbReference type="GO" id="GO:0005829">
    <property type="term" value="C:cytosol"/>
    <property type="evidence" value="ECO:0007669"/>
    <property type="project" value="TreeGrafter"/>
</dbReference>
<dbReference type="GO" id="GO:0003723">
    <property type="term" value="F:RNA binding"/>
    <property type="evidence" value="ECO:0007669"/>
    <property type="project" value="InterPro"/>
</dbReference>
<dbReference type="GO" id="GO:0160150">
    <property type="term" value="F:tRNA pseudouridine(13) synthase activity"/>
    <property type="evidence" value="ECO:0007669"/>
    <property type="project" value="UniProtKB-EC"/>
</dbReference>
<dbReference type="GO" id="GO:0031119">
    <property type="term" value="P:tRNA pseudouridine synthesis"/>
    <property type="evidence" value="ECO:0007669"/>
    <property type="project" value="UniProtKB-UniRule"/>
</dbReference>
<dbReference type="CDD" id="cd02575">
    <property type="entry name" value="PseudoU_synth_EcTruD"/>
    <property type="match status" value="1"/>
</dbReference>
<dbReference type="Gene3D" id="3.30.2350.20">
    <property type="entry name" value="TruD, catalytic domain"/>
    <property type="match status" value="1"/>
</dbReference>
<dbReference type="HAMAP" id="MF_01082">
    <property type="entry name" value="TruD"/>
    <property type="match status" value="1"/>
</dbReference>
<dbReference type="InterPro" id="IPR020103">
    <property type="entry name" value="PsdUridine_synth_cat_dom_sf"/>
</dbReference>
<dbReference type="InterPro" id="IPR001656">
    <property type="entry name" value="PsdUridine_synth_TruD"/>
</dbReference>
<dbReference type="InterPro" id="IPR020119">
    <property type="entry name" value="PsdUridine_synth_TruD_CS"/>
</dbReference>
<dbReference type="InterPro" id="IPR011760">
    <property type="entry name" value="PsdUridine_synth_TruD_insert"/>
</dbReference>
<dbReference type="InterPro" id="IPR042214">
    <property type="entry name" value="TruD_catalytic"/>
</dbReference>
<dbReference type="InterPro" id="IPR050170">
    <property type="entry name" value="TruD_pseudoU_synthase"/>
</dbReference>
<dbReference type="NCBIfam" id="NF002154">
    <property type="entry name" value="PRK00984.1-3"/>
    <property type="match status" value="1"/>
</dbReference>
<dbReference type="NCBIfam" id="TIGR00094">
    <property type="entry name" value="tRNA_TruD_broad"/>
    <property type="match status" value="1"/>
</dbReference>
<dbReference type="PANTHER" id="PTHR47811">
    <property type="entry name" value="TRNA PSEUDOURIDINE SYNTHASE D"/>
    <property type="match status" value="1"/>
</dbReference>
<dbReference type="PANTHER" id="PTHR47811:SF1">
    <property type="entry name" value="TRNA PSEUDOURIDINE SYNTHASE D"/>
    <property type="match status" value="1"/>
</dbReference>
<dbReference type="Pfam" id="PF01142">
    <property type="entry name" value="TruD"/>
    <property type="match status" value="2"/>
</dbReference>
<dbReference type="SUPFAM" id="SSF55120">
    <property type="entry name" value="Pseudouridine synthase"/>
    <property type="match status" value="1"/>
</dbReference>
<dbReference type="PROSITE" id="PS50984">
    <property type="entry name" value="TRUD"/>
    <property type="match status" value="1"/>
</dbReference>
<dbReference type="PROSITE" id="PS01268">
    <property type="entry name" value="UPF0024"/>
    <property type="match status" value="1"/>
</dbReference>
<evidence type="ECO:0000255" key="1">
    <source>
        <dbReference type="HAMAP-Rule" id="MF_01082"/>
    </source>
</evidence>
<protein>
    <recommendedName>
        <fullName evidence="1">tRNA pseudouridine synthase D</fullName>
        <ecNumber evidence="1">5.4.99.27</ecNumber>
    </recommendedName>
    <alternativeName>
        <fullName evidence="1">tRNA pseudouridine(13) synthase</fullName>
    </alternativeName>
    <alternativeName>
        <fullName evidence="1">tRNA pseudouridylate synthase D</fullName>
    </alternativeName>
    <alternativeName>
        <fullName evidence="1">tRNA-uridine isomerase D</fullName>
    </alternativeName>
</protein>
<proteinExistence type="inferred from homology"/>
<organism>
    <name type="scientific">Nitratiruptor sp. (strain SB155-2)</name>
    <dbReference type="NCBI Taxonomy" id="387092"/>
    <lineage>
        <taxon>Bacteria</taxon>
        <taxon>Pseudomonadati</taxon>
        <taxon>Campylobacterota</taxon>
        <taxon>Epsilonproteobacteria</taxon>
        <taxon>Nautiliales</taxon>
        <taxon>Nitratiruptoraceae</taxon>
        <taxon>Nitratiruptor</taxon>
    </lineage>
</organism>
<reference key="1">
    <citation type="journal article" date="2007" name="Proc. Natl. Acad. Sci. U.S.A.">
        <title>Deep-sea vent epsilon-proteobacterial genomes provide insights into emergence of pathogens.</title>
        <authorList>
            <person name="Nakagawa S."/>
            <person name="Takaki Y."/>
            <person name="Shimamura S."/>
            <person name="Reysenbach A.-L."/>
            <person name="Takai K."/>
            <person name="Horikoshi K."/>
        </authorList>
    </citation>
    <scope>NUCLEOTIDE SEQUENCE [LARGE SCALE GENOMIC DNA]</scope>
    <source>
        <strain>SB155-2</strain>
    </source>
</reference>
<comment type="function">
    <text evidence="1">Responsible for synthesis of pseudouridine from uracil-13 in transfer RNAs.</text>
</comment>
<comment type="catalytic activity">
    <reaction evidence="1">
        <text>uridine(13) in tRNA = pseudouridine(13) in tRNA</text>
        <dbReference type="Rhea" id="RHEA:42540"/>
        <dbReference type="Rhea" id="RHEA-COMP:10105"/>
        <dbReference type="Rhea" id="RHEA-COMP:10106"/>
        <dbReference type="ChEBI" id="CHEBI:65314"/>
        <dbReference type="ChEBI" id="CHEBI:65315"/>
        <dbReference type="EC" id="5.4.99.27"/>
    </reaction>
</comment>
<comment type="similarity">
    <text evidence="1">Belongs to the pseudouridine synthase TruD family.</text>
</comment>
<keyword id="KW-0413">Isomerase</keyword>
<keyword id="KW-1185">Reference proteome</keyword>
<keyword id="KW-0819">tRNA processing</keyword>
<feature type="chain" id="PRO_1000084753" description="tRNA pseudouridine synthase D">
    <location>
        <begin position="1"/>
        <end position="360"/>
    </location>
</feature>
<feature type="domain" description="TRUD" evidence="1">
    <location>
        <begin position="151"/>
        <end position="332"/>
    </location>
</feature>
<feature type="active site" description="Nucleophile" evidence="1">
    <location>
        <position position="76"/>
    </location>
</feature>